<protein>
    <recommendedName>
        <fullName>HIG1 domain-containing protein C25B8.07c, mitochondrial</fullName>
    </recommendedName>
</protein>
<comment type="subcellular location">
    <subcellularLocation>
        <location evidence="1 3">Mitochondrion membrane</location>
        <topology evidence="1 3">Multi-pass membrane protein</topology>
    </subcellularLocation>
</comment>
<dbReference type="EMBL" id="CU329670">
    <property type="protein sequence ID" value="CAB61773.1"/>
    <property type="molecule type" value="Genomic_DNA"/>
</dbReference>
<dbReference type="PIR" id="T50194">
    <property type="entry name" value="T50194"/>
</dbReference>
<dbReference type="BioGRID" id="279115">
    <property type="interactions" value="4"/>
</dbReference>
<dbReference type="FunCoup" id="Q9UTB1">
    <property type="interactions" value="207"/>
</dbReference>
<dbReference type="STRING" id="284812.Q9UTB1"/>
<dbReference type="iPTMnet" id="Q9UTB1"/>
<dbReference type="PaxDb" id="4896-SPAC25B8.07c.1"/>
<dbReference type="EnsemblFungi" id="SPAC25B8.07c.1">
    <property type="protein sequence ID" value="SPAC25B8.07c.1:pep"/>
    <property type="gene ID" value="SPAC25B8.07c"/>
</dbReference>
<dbReference type="KEGG" id="spo:2542662"/>
<dbReference type="PomBase" id="SPAC25B8.07c"/>
<dbReference type="VEuPathDB" id="FungiDB:SPAC25B8.07c"/>
<dbReference type="eggNOG" id="KOG4431">
    <property type="taxonomic scope" value="Eukaryota"/>
</dbReference>
<dbReference type="HOGENOM" id="CLU_2211472_0_0_1"/>
<dbReference type="InParanoid" id="Q9UTB1"/>
<dbReference type="OMA" id="FGVLFMN"/>
<dbReference type="PhylomeDB" id="Q9UTB1"/>
<dbReference type="PRO" id="PR:Q9UTB1"/>
<dbReference type="Proteomes" id="UP000002485">
    <property type="component" value="Chromosome I"/>
</dbReference>
<dbReference type="GO" id="GO:0005743">
    <property type="term" value="C:mitochondrial inner membrane"/>
    <property type="evidence" value="ECO:0000266"/>
    <property type="project" value="PomBase"/>
</dbReference>
<dbReference type="GO" id="GO:0005739">
    <property type="term" value="C:mitochondrion"/>
    <property type="evidence" value="ECO:0007005"/>
    <property type="project" value="PomBase"/>
</dbReference>
<dbReference type="GO" id="GO:0033617">
    <property type="term" value="P:mitochondrial cytochrome c oxidase assembly"/>
    <property type="evidence" value="ECO:0000266"/>
    <property type="project" value="PomBase"/>
</dbReference>
<dbReference type="GO" id="GO:0097250">
    <property type="term" value="P:mitochondrial respirasome assembly"/>
    <property type="evidence" value="ECO:0000318"/>
    <property type="project" value="GO_Central"/>
</dbReference>
<dbReference type="Gene3D" id="6.10.140.1320">
    <property type="match status" value="1"/>
</dbReference>
<dbReference type="InterPro" id="IPR007667">
    <property type="entry name" value="Hypoxia_induced_domain"/>
</dbReference>
<dbReference type="InterPro" id="IPR050355">
    <property type="entry name" value="RCF1"/>
</dbReference>
<dbReference type="PANTHER" id="PTHR12297:SF3">
    <property type="entry name" value="HIG1 DOMAIN FAMILY MEMBER 1A"/>
    <property type="match status" value="1"/>
</dbReference>
<dbReference type="PANTHER" id="PTHR12297">
    <property type="entry name" value="HYPOXIA-INDUCBILE GENE 1 HIG1 -RELATED"/>
    <property type="match status" value="1"/>
</dbReference>
<dbReference type="Pfam" id="PF04588">
    <property type="entry name" value="HIG_1_N"/>
    <property type="match status" value="1"/>
</dbReference>
<dbReference type="PROSITE" id="PS51503">
    <property type="entry name" value="HIG1"/>
    <property type="match status" value="1"/>
</dbReference>
<evidence type="ECO:0000255" key="1">
    <source>
        <dbReference type="PROSITE-ProRule" id="PRU00836"/>
    </source>
</evidence>
<evidence type="ECO:0000256" key="2">
    <source>
        <dbReference type="SAM" id="MobiDB-lite"/>
    </source>
</evidence>
<evidence type="ECO:0000269" key="3">
    <source>
    </source>
</evidence>
<organism>
    <name type="scientific">Schizosaccharomyces pombe (strain 972 / ATCC 24843)</name>
    <name type="common">Fission yeast</name>
    <dbReference type="NCBI Taxonomy" id="284812"/>
    <lineage>
        <taxon>Eukaryota</taxon>
        <taxon>Fungi</taxon>
        <taxon>Dikarya</taxon>
        <taxon>Ascomycota</taxon>
        <taxon>Taphrinomycotina</taxon>
        <taxon>Schizosaccharomycetes</taxon>
        <taxon>Schizosaccharomycetales</taxon>
        <taxon>Schizosaccharomycetaceae</taxon>
        <taxon>Schizosaccharomyces</taxon>
    </lineage>
</organism>
<feature type="chain" id="PRO_0000372339" description="HIG1 domain-containing protein C25B8.07c, mitochondrial">
    <location>
        <begin position="1"/>
        <end position="113"/>
    </location>
</feature>
<feature type="transmembrane region" description="Helical" evidence="1">
    <location>
        <begin position="39"/>
        <end position="59"/>
    </location>
</feature>
<feature type="transmembrane region" description="Helical" evidence="1">
    <location>
        <begin position="75"/>
        <end position="95"/>
    </location>
</feature>
<feature type="domain" description="HIG1" evidence="1">
    <location>
        <begin position="12"/>
        <end position="103"/>
    </location>
</feature>
<feature type="region of interest" description="Disordered" evidence="2">
    <location>
        <begin position="1"/>
        <end position="27"/>
    </location>
</feature>
<proteinExistence type="inferred from homology"/>
<sequence length="113" mass="12741">MSSKLPKKSEENLELPTFPASEESLSRSEKLKYVFVRNPFIPLGCLMTVGTFLASGYYIRRENHLMANKFMRYRVMSQGFTLAALAFSVLFIGPPRREAPSNSSGSINSEIKK</sequence>
<gene>
    <name type="ORF">SPAC25B8.07c</name>
</gene>
<reference key="1">
    <citation type="journal article" date="2002" name="Nature">
        <title>The genome sequence of Schizosaccharomyces pombe.</title>
        <authorList>
            <person name="Wood V."/>
            <person name="Gwilliam R."/>
            <person name="Rajandream M.A."/>
            <person name="Lyne M.H."/>
            <person name="Lyne R."/>
            <person name="Stewart A."/>
            <person name="Sgouros J.G."/>
            <person name="Peat N."/>
            <person name="Hayles J."/>
            <person name="Baker S.G."/>
            <person name="Basham D."/>
            <person name="Bowman S."/>
            <person name="Brooks K."/>
            <person name="Brown D."/>
            <person name="Brown S."/>
            <person name="Chillingworth T."/>
            <person name="Churcher C.M."/>
            <person name="Collins M."/>
            <person name="Connor R."/>
            <person name="Cronin A."/>
            <person name="Davis P."/>
            <person name="Feltwell T."/>
            <person name="Fraser A."/>
            <person name="Gentles S."/>
            <person name="Goble A."/>
            <person name="Hamlin N."/>
            <person name="Harris D.E."/>
            <person name="Hidalgo J."/>
            <person name="Hodgson G."/>
            <person name="Holroyd S."/>
            <person name="Hornsby T."/>
            <person name="Howarth S."/>
            <person name="Huckle E.J."/>
            <person name="Hunt S."/>
            <person name="Jagels K."/>
            <person name="James K.D."/>
            <person name="Jones L."/>
            <person name="Jones M."/>
            <person name="Leather S."/>
            <person name="McDonald S."/>
            <person name="McLean J."/>
            <person name="Mooney P."/>
            <person name="Moule S."/>
            <person name="Mungall K.L."/>
            <person name="Murphy L.D."/>
            <person name="Niblett D."/>
            <person name="Odell C."/>
            <person name="Oliver K."/>
            <person name="O'Neil S."/>
            <person name="Pearson D."/>
            <person name="Quail M.A."/>
            <person name="Rabbinowitsch E."/>
            <person name="Rutherford K.M."/>
            <person name="Rutter S."/>
            <person name="Saunders D."/>
            <person name="Seeger K."/>
            <person name="Sharp S."/>
            <person name="Skelton J."/>
            <person name="Simmonds M.N."/>
            <person name="Squares R."/>
            <person name="Squares S."/>
            <person name="Stevens K."/>
            <person name="Taylor K."/>
            <person name="Taylor R.G."/>
            <person name="Tivey A."/>
            <person name="Walsh S.V."/>
            <person name="Warren T."/>
            <person name="Whitehead S."/>
            <person name="Woodward J.R."/>
            <person name="Volckaert G."/>
            <person name="Aert R."/>
            <person name="Robben J."/>
            <person name="Grymonprez B."/>
            <person name="Weltjens I."/>
            <person name="Vanstreels E."/>
            <person name="Rieger M."/>
            <person name="Schaefer M."/>
            <person name="Mueller-Auer S."/>
            <person name="Gabel C."/>
            <person name="Fuchs M."/>
            <person name="Duesterhoeft A."/>
            <person name="Fritzc C."/>
            <person name="Holzer E."/>
            <person name="Moestl D."/>
            <person name="Hilbert H."/>
            <person name="Borzym K."/>
            <person name="Langer I."/>
            <person name="Beck A."/>
            <person name="Lehrach H."/>
            <person name="Reinhardt R."/>
            <person name="Pohl T.M."/>
            <person name="Eger P."/>
            <person name="Zimmermann W."/>
            <person name="Wedler H."/>
            <person name="Wambutt R."/>
            <person name="Purnelle B."/>
            <person name="Goffeau A."/>
            <person name="Cadieu E."/>
            <person name="Dreano S."/>
            <person name="Gloux S."/>
            <person name="Lelaure V."/>
            <person name="Mottier S."/>
            <person name="Galibert F."/>
            <person name="Aves S.J."/>
            <person name="Xiang Z."/>
            <person name="Hunt C."/>
            <person name="Moore K."/>
            <person name="Hurst S.M."/>
            <person name="Lucas M."/>
            <person name="Rochet M."/>
            <person name="Gaillardin C."/>
            <person name="Tallada V.A."/>
            <person name="Garzon A."/>
            <person name="Thode G."/>
            <person name="Daga R.R."/>
            <person name="Cruzado L."/>
            <person name="Jimenez J."/>
            <person name="Sanchez M."/>
            <person name="del Rey F."/>
            <person name="Benito J."/>
            <person name="Dominguez A."/>
            <person name="Revuelta J.L."/>
            <person name="Moreno S."/>
            <person name="Armstrong J."/>
            <person name="Forsburg S.L."/>
            <person name="Cerutti L."/>
            <person name="Lowe T."/>
            <person name="McCombie W.R."/>
            <person name="Paulsen I."/>
            <person name="Potashkin J."/>
            <person name="Shpakovski G.V."/>
            <person name="Ussery D."/>
            <person name="Barrell B.G."/>
            <person name="Nurse P."/>
        </authorList>
    </citation>
    <scope>NUCLEOTIDE SEQUENCE [LARGE SCALE GENOMIC DNA]</scope>
    <source>
        <strain>972 / ATCC 24843</strain>
    </source>
</reference>
<reference key="2">
    <citation type="journal article" date="2006" name="Nat. Biotechnol.">
        <title>ORFeome cloning and global analysis of protein localization in the fission yeast Schizosaccharomyces pombe.</title>
        <authorList>
            <person name="Matsuyama A."/>
            <person name="Arai R."/>
            <person name="Yashiroda Y."/>
            <person name="Shirai A."/>
            <person name="Kamata A."/>
            <person name="Sekido S."/>
            <person name="Kobayashi Y."/>
            <person name="Hashimoto A."/>
            <person name="Hamamoto M."/>
            <person name="Hiraoka Y."/>
            <person name="Horinouchi S."/>
            <person name="Yoshida M."/>
        </authorList>
    </citation>
    <scope>SUBCELLULAR LOCATION [LARGE SCALE ANALYSIS]</scope>
</reference>
<keyword id="KW-0472">Membrane</keyword>
<keyword id="KW-0496">Mitochondrion</keyword>
<keyword id="KW-1185">Reference proteome</keyword>
<keyword id="KW-0812">Transmembrane</keyword>
<keyword id="KW-1133">Transmembrane helix</keyword>
<name>YL87_SCHPO</name>
<accession>Q9UTB1</accession>